<name>RL16_BURO0</name>
<dbReference type="EMBL" id="CP000958">
    <property type="protein sequence ID" value="ACA89514.1"/>
    <property type="molecule type" value="Genomic_DNA"/>
</dbReference>
<dbReference type="RefSeq" id="WP_006482873.1">
    <property type="nucleotide sequence ID" value="NC_010508.1"/>
</dbReference>
<dbReference type="SMR" id="B1JU29"/>
<dbReference type="GeneID" id="93193444"/>
<dbReference type="KEGG" id="bcm:Bcenmc03_0334"/>
<dbReference type="HOGENOM" id="CLU_078858_2_1_4"/>
<dbReference type="Proteomes" id="UP000002169">
    <property type="component" value="Chromosome 1"/>
</dbReference>
<dbReference type="GO" id="GO:0022625">
    <property type="term" value="C:cytosolic large ribosomal subunit"/>
    <property type="evidence" value="ECO:0007669"/>
    <property type="project" value="TreeGrafter"/>
</dbReference>
<dbReference type="GO" id="GO:0019843">
    <property type="term" value="F:rRNA binding"/>
    <property type="evidence" value="ECO:0007669"/>
    <property type="project" value="UniProtKB-UniRule"/>
</dbReference>
<dbReference type="GO" id="GO:0003735">
    <property type="term" value="F:structural constituent of ribosome"/>
    <property type="evidence" value="ECO:0007669"/>
    <property type="project" value="InterPro"/>
</dbReference>
<dbReference type="GO" id="GO:0000049">
    <property type="term" value="F:tRNA binding"/>
    <property type="evidence" value="ECO:0007669"/>
    <property type="project" value="UniProtKB-KW"/>
</dbReference>
<dbReference type="GO" id="GO:0006412">
    <property type="term" value="P:translation"/>
    <property type="evidence" value="ECO:0007669"/>
    <property type="project" value="UniProtKB-UniRule"/>
</dbReference>
<dbReference type="CDD" id="cd01433">
    <property type="entry name" value="Ribosomal_L16_L10e"/>
    <property type="match status" value="1"/>
</dbReference>
<dbReference type="FunFam" id="3.90.1170.10:FF:000001">
    <property type="entry name" value="50S ribosomal protein L16"/>
    <property type="match status" value="1"/>
</dbReference>
<dbReference type="Gene3D" id="3.90.1170.10">
    <property type="entry name" value="Ribosomal protein L10e/L16"/>
    <property type="match status" value="1"/>
</dbReference>
<dbReference type="HAMAP" id="MF_01342">
    <property type="entry name" value="Ribosomal_uL16"/>
    <property type="match status" value="1"/>
</dbReference>
<dbReference type="InterPro" id="IPR047873">
    <property type="entry name" value="Ribosomal_uL16"/>
</dbReference>
<dbReference type="InterPro" id="IPR000114">
    <property type="entry name" value="Ribosomal_uL16_bact-type"/>
</dbReference>
<dbReference type="InterPro" id="IPR020798">
    <property type="entry name" value="Ribosomal_uL16_CS"/>
</dbReference>
<dbReference type="InterPro" id="IPR016180">
    <property type="entry name" value="Ribosomal_uL16_dom"/>
</dbReference>
<dbReference type="InterPro" id="IPR036920">
    <property type="entry name" value="Ribosomal_uL16_sf"/>
</dbReference>
<dbReference type="NCBIfam" id="TIGR01164">
    <property type="entry name" value="rplP_bact"/>
    <property type="match status" value="1"/>
</dbReference>
<dbReference type="PANTHER" id="PTHR12220">
    <property type="entry name" value="50S/60S RIBOSOMAL PROTEIN L16"/>
    <property type="match status" value="1"/>
</dbReference>
<dbReference type="PANTHER" id="PTHR12220:SF13">
    <property type="entry name" value="LARGE RIBOSOMAL SUBUNIT PROTEIN UL16M"/>
    <property type="match status" value="1"/>
</dbReference>
<dbReference type="Pfam" id="PF00252">
    <property type="entry name" value="Ribosomal_L16"/>
    <property type="match status" value="1"/>
</dbReference>
<dbReference type="PRINTS" id="PR00060">
    <property type="entry name" value="RIBOSOMALL16"/>
</dbReference>
<dbReference type="SUPFAM" id="SSF54686">
    <property type="entry name" value="Ribosomal protein L16p/L10e"/>
    <property type="match status" value="1"/>
</dbReference>
<dbReference type="PROSITE" id="PS00586">
    <property type="entry name" value="RIBOSOMAL_L16_1"/>
    <property type="match status" value="1"/>
</dbReference>
<gene>
    <name evidence="1" type="primary">rplP</name>
    <name type="ordered locus">Bcenmc03_0334</name>
</gene>
<proteinExistence type="inferred from homology"/>
<organism>
    <name type="scientific">Burkholderia orbicola (strain MC0-3)</name>
    <dbReference type="NCBI Taxonomy" id="406425"/>
    <lineage>
        <taxon>Bacteria</taxon>
        <taxon>Pseudomonadati</taxon>
        <taxon>Pseudomonadota</taxon>
        <taxon>Betaproteobacteria</taxon>
        <taxon>Burkholderiales</taxon>
        <taxon>Burkholderiaceae</taxon>
        <taxon>Burkholderia</taxon>
        <taxon>Burkholderia cepacia complex</taxon>
        <taxon>Burkholderia orbicola</taxon>
    </lineage>
</organism>
<reference key="1">
    <citation type="submission" date="2008-02" db="EMBL/GenBank/DDBJ databases">
        <title>Complete sequence of chromosome 1 of Burkholderia cenocepacia MC0-3.</title>
        <authorList>
            <person name="Copeland A."/>
            <person name="Lucas S."/>
            <person name="Lapidus A."/>
            <person name="Barry K."/>
            <person name="Bruce D."/>
            <person name="Goodwin L."/>
            <person name="Glavina del Rio T."/>
            <person name="Dalin E."/>
            <person name="Tice H."/>
            <person name="Pitluck S."/>
            <person name="Chain P."/>
            <person name="Malfatti S."/>
            <person name="Shin M."/>
            <person name="Vergez L."/>
            <person name="Schmutz J."/>
            <person name="Larimer F."/>
            <person name="Land M."/>
            <person name="Hauser L."/>
            <person name="Kyrpides N."/>
            <person name="Mikhailova N."/>
            <person name="Tiedje J."/>
            <person name="Richardson P."/>
        </authorList>
    </citation>
    <scope>NUCLEOTIDE SEQUENCE [LARGE SCALE GENOMIC DNA]</scope>
    <source>
        <strain>MC0-3</strain>
    </source>
</reference>
<sequence>MLQPKRRKYRKEQKGRNTGKATRGNAVSFGEFGLKAIGRGRLTARQIEAARRAMTRHIKRGGRIWIRIFPDKPISQKPAEVRMGNGKGNPEYYVAEIQPGKMLYEMDGVTEELAREAFRLAAAKLPLKTAFIVRQLGA</sequence>
<keyword id="KW-0687">Ribonucleoprotein</keyword>
<keyword id="KW-0689">Ribosomal protein</keyword>
<keyword id="KW-0694">RNA-binding</keyword>
<keyword id="KW-0699">rRNA-binding</keyword>
<keyword id="KW-0820">tRNA-binding</keyword>
<evidence type="ECO:0000255" key="1">
    <source>
        <dbReference type="HAMAP-Rule" id="MF_01342"/>
    </source>
</evidence>
<evidence type="ECO:0000256" key="2">
    <source>
        <dbReference type="SAM" id="MobiDB-lite"/>
    </source>
</evidence>
<evidence type="ECO:0000305" key="3"/>
<accession>B1JU29</accession>
<comment type="function">
    <text evidence="1">Binds 23S rRNA and is also seen to make contacts with the A and possibly P site tRNAs.</text>
</comment>
<comment type="subunit">
    <text evidence="1">Part of the 50S ribosomal subunit.</text>
</comment>
<comment type="similarity">
    <text evidence="1">Belongs to the universal ribosomal protein uL16 family.</text>
</comment>
<protein>
    <recommendedName>
        <fullName evidence="1">Large ribosomal subunit protein uL16</fullName>
    </recommendedName>
    <alternativeName>
        <fullName evidence="3">50S ribosomal protein L16</fullName>
    </alternativeName>
</protein>
<feature type="chain" id="PRO_1000142936" description="Large ribosomal subunit protein uL16">
    <location>
        <begin position="1"/>
        <end position="138"/>
    </location>
</feature>
<feature type="region of interest" description="Disordered" evidence="2">
    <location>
        <begin position="1"/>
        <end position="24"/>
    </location>
</feature>
<feature type="compositionally biased region" description="Basic residues" evidence="2">
    <location>
        <begin position="1"/>
        <end position="13"/>
    </location>
</feature>